<dbReference type="EMBL" id="X62386">
    <property type="protein sequence ID" value="CAA44251.1"/>
    <property type="molecule type" value="Genomic_DNA"/>
</dbReference>
<dbReference type="PIR" id="S23414">
    <property type="entry name" value="S23414"/>
</dbReference>
<dbReference type="SMR" id="P30194"/>
<dbReference type="GO" id="GO:0005886">
    <property type="term" value="C:plasma membrane"/>
    <property type="evidence" value="ECO:0007669"/>
    <property type="project" value="UniProtKB-SubCell"/>
</dbReference>
<dbReference type="GO" id="GO:0015421">
    <property type="term" value="F:ABC-type oligopeptide transporter activity"/>
    <property type="evidence" value="ECO:0007669"/>
    <property type="project" value="TreeGrafter"/>
</dbReference>
<dbReference type="GO" id="GO:0005524">
    <property type="term" value="F:ATP binding"/>
    <property type="evidence" value="ECO:0007669"/>
    <property type="project" value="InterPro"/>
</dbReference>
<dbReference type="Gene3D" id="1.20.1560.10">
    <property type="entry name" value="ABC transporter type 1, transmembrane domain"/>
    <property type="match status" value="1"/>
</dbReference>
<dbReference type="InterPro" id="IPR011527">
    <property type="entry name" value="ABC1_TM_dom"/>
</dbReference>
<dbReference type="InterPro" id="IPR036640">
    <property type="entry name" value="ABC1_TM_sf"/>
</dbReference>
<dbReference type="InterPro" id="IPR039421">
    <property type="entry name" value="Type_1_exporter"/>
</dbReference>
<dbReference type="PANTHER" id="PTHR43394:SF1">
    <property type="entry name" value="ATP-BINDING CASSETTE SUB-FAMILY B MEMBER 10, MITOCHONDRIAL"/>
    <property type="match status" value="1"/>
</dbReference>
<dbReference type="PANTHER" id="PTHR43394">
    <property type="entry name" value="ATP-DEPENDENT PERMEASE MDL1, MITOCHONDRIAL"/>
    <property type="match status" value="1"/>
</dbReference>
<dbReference type="Pfam" id="PF00664">
    <property type="entry name" value="ABC_membrane"/>
    <property type="match status" value="1"/>
</dbReference>
<dbReference type="SUPFAM" id="SSF90123">
    <property type="entry name" value="ABC transporter transmembrane region"/>
    <property type="match status" value="1"/>
</dbReference>
<dbReference type="PROSITE" id="PS50929">
    <property type="entry name" value="ABC_TM1F"/>
    <property type="match status" value="1"/>
</dbReference>
<comment type="subcellular location">
    <subcellularLocation>
        <location evidence="2">Cell membrane</location>
        <topology evidence="1">Multi-pass membrane protein</topology>
    </subcellularLocation>
</comment>
<sequence>SLKGDDIIKGLYDLWKITKPNTLLLSIGLIFSLIGTSFSLYIPLIIRNALNKSSLSTDKIVIIIICFGLTLIFSGVSTYILGYIGQKIIQNIRSVTWNKVIKLPYSFHLKNSASNLTSRLVNDTMNITRVFSVEFIFSYSITNIFIYN</sequence>
<proteinExistence type="inferred from homology"/>
<protein>
    <recommendedName>
        <fullName>Uncharacterized 16.7 kDa protein in epiA 5'region</fullName>
    </recommendedName>
</protein>
<accession>P30194</accession>
<evidence type="ECO:0000255" key="1">
    <source>
        <dbReference type="PROSITE-ProRule" id="PRU00441"/>
    </source>
</evidence>
<evidence type="ECO:0000305" key="2"/>
<organism>
    <name type="scientific">Staphylococcus epidermidis</name>
    <dbReference type="NCBI Taxonomy" id="1282"/>
    <lineage>
        <taxon>Bacteria</taxon>
        <taxon>Bacillati</taxon>
        <taxon>Bacillota</taxon>
        <taxon>Bacilli</taxon>
        <taxon>Bacillales</taxon>
        <taxon>Staphylococcaceae</taxon>
        <taxon>Staphylococcus</taxon>
    </lineage>
</organism>
<gene>
    <name type="primary">epiY</name>
</gene>
<reference key="1">
    <citation type="journal article" date="1992" name="Eur. J. Biochem.">
        <title>Analysis of genes involved in the biosynthesis of lantibiotic epidermin.</title>
        <authorList>
            <person name="Schnell N."/>
            <person name="Engelke G."/>
            <person name="Augustin J."/>
            <person name="Rosenstein R."/>
            <person name="Ungermann V."/>
            <person name="Goetz F."/>
            <person name="Entian K.-D."/>
        </authorList>
    </citation>
    <scope>NUCLEOTIDE SEQUENCE [GENOMIC DNA]</scope>
    <source>
        <strain>TU 3298 / DSM 3095</strain>
    </source>
</reference>
<keyword id="KW-1003">Cell membrane</keyword>
<keyword id="KW-0472">Membrane</keyword>
<keyword id="KW-0614">Plasmid</keyword>
<keyword id="KW-0812">Transmembrane</keyword>
<keyword id="KW-1133">Transmembrane helix</keyword>
<geneLocation type="plasmid">
    <name>pTu 32</name>
</geneLocation>
<feature type="chain" id="PRO_0000086990" description="Uncharacterized 16.7 kDa protein in epiA 5'region">
    <location>
        <begin position="1"/>
        <end position="148"/>
    </location>
</feature>
<feature type="transmembrane region" description="Helical" evidence="1">
    <location>
        <begin position="26"/>
        <end position="46"/>
    </location>
</feature>
<feature type="transmembrane region" description="Helical" evidence="1">
    <location>
        <begin position="60"/>
        <end position="80"/>
    </location>
</feature>
<feature type="transmembrane region" description="Helical" evidence="1">
    <location>
        <begin position="127"/>
        <end position="147"/>
    </location>
</feature>
<feature type="domain" description="ABC transmembrane type-1" evidence="1">
    <location>
        <begin position="25"/>
        <end position="148"/>
    </location>
</feature>
<name>EPIY_STAEP</name>